<proteinExistence type="inferred from homology"/>
<feature type="chain" id="PRO_1000007928" description="S-adenosylmethionine synthase">
    <location>
        <begin position="1"/>
        <end position="395"/>
    </location>
</feature>
<feature type="region of interest" description="Flexible loop" evidence="1">
    <location>
        <begin position="100"/>
        <end position="110"/>
    </location>
</feature>
<feature type="binding site" description="in other chain" evidence="1">
    <location>
        <position position="16"/>
    </location>
    <ligand>
        <name>ATP</name>
        <dbReference type="ChEBI" id="CHEBI:30616"/>
        <note>ligand shared between two neighboring subunits</note>
    </ligand>
</feature>
<feature type="binding site" evidence="1">
    <location>
        <position position="18"/>
    </location>
    <ligand>
        <name>Mg(2+)</name>
        <dbReference type="ChEBI" id="CHEBI:18420"/>
    </ligand>
</feature>
<feature type="binding site" evidence="1">
    <location>
        <position position="44"/>
    </location>
    <ligand>
        <name>K(+)</name>
        <dbReference type="ChEBI" id="CHEBI:29103"/>
    </ligand>
</feature>
<feature type="binding site" description="in other chain" evidence="1">
    <location>
        <position position="57"/>
    </location>
    <ligand>
        <name>L-methionine</name>
        <dbReference type="ChEBI" id="CHEBI:57844"/>
        <note>ligand shared between two neighboring subunits</note>
    </ligand>
</feature>
<feature type="binding site" description="in other chain" evidence="1">
    <location>
        <position position="100"/>
    </location>
    <ligand>
        <name>L-methionine</name>
        <dbReference type="ChEBI" id="CHEBI:57844"/>
        <note>ligand shared between two neighboring subunits</note>
    </ligand>
</feature>
<feature type="binding site" description="in other chain" evidence="1">
    <location>
        <begin position="167"/>
        <end position="169"/>
    </location>
    <ligand>
        <name>ATP</name>
        <dbReference type="ChEBI" id="CHEBI:30616"/>
        <note>ligand shared between two neighboring subunits</note>
    </ligand>
</feature>
<feature type="binding site" description="in other chain" evidence="1">
    <location>
        <begin position="233"/>
        <end position="234"/>
    </location>
    <ligand>
        <name>ATP</name>
        <dbReference type="ChEBI" id="CHEBI:30616"/>
        <note>ligand shared between two neighboring subunits</note>
    </ligand>
</feature>
<feature type="binding site" evidence="1">
    <location>
        <position position="242"/>
    </location>
    <ligand>
        <name>ATP</name>
        <dbReference type="ChEBI" id="CHEBI:30616"/>
        <note>ligand shared between two neighboring subunits</note>
    </ligand>
</feature>
<feature type="binding site" evidence="1">
    <location>
        <position position="242"/>
    </location>
    <ligand>
        <name>L-methionine</name>
        <dbReference type="ChEBI" id="CHEBI:57844"/>
        <note>ligand shared between two neighboring subunits</note>
    </ligand>
</feature>
<feature type="binding site" description="in other chain" evidence="1">
    <location>
        <begin position="248"/>
        <end position="249"/>
    </location>
    <ligand>
        <name>ATP</name>
        <dbReference type="ChEBI" id="CHEBI:30616"/>
        <note>ligand shared between two neighboring subunits</note>
    </ligand>
</feature>
<feature type="binding site" evidence="1">
    <location>
        <position position="265"/>
    </location>
    <ligand>
        <name>ATP</name>
        <dbReference type="ChEBI" id="CHEBI:30616"/>
        <note>ligand shared between two neighboring subunits</note>
    </ligand>
</feature>
<feature type="binding site" evidence="1">
    <location>
        <position position="269"/>
    </location>
    <ligand>
        <name>ATP</name>
        <dbReference type="ChEBI" id="CHEBI:30616"/>
        <note>ligand shared between two neighboring subunits</note>
    </ligand>
</feature>
<feature type="binding site" description="in other chain" evidence="1">
    <location>
        <position position="273"/>
    </location>
    <ligand>
        <name>L-methionine</name>
        <dbReference type="ChEBI" id="CHEBI:57844"/>
        <note>ligand shared between two neighboring subunits</note>
    </ligand>
</feature>
<evidence type="ECO:0000255" key="1">
    <source>
        <dbReference type="HAMAP-Rule" id="MF_00086"/>
    </source>
</evidence>
<comment type="function">
    <text evidence="1">Catalyzes the formation of S-adenosylmethionine (AdoMet) from methionine and ATP. The overall synthetic reaction is composed of two sequential steps, AdoMet formation and the subsequent tripolyphosphate hydrolysis which occurs prior to release of AdoMet from the enzyme.</text>
</comment>
<comment type="catalytic activity">
    <reaction evidence="1">
        <text>L-methionine + ATP + H2O = S-adenosyl-L-methionine + phosphate + diphosphate</text>
        <dbReference type="Rhea" id="RHEA:21080"/>
        <dbReference type="ChEBI" id="CHEBI:15377"/>
        <dbReference type="ChEBI" id="CHEBI:30616"/>
        <dbReference type="ChEBI" id="CHEBI:33019"/>
        <dbReference type="ChEBI" id="CHEBI:43474"/>
        <dbReference type="ChEBI" id="CHEBI:57844"/>
        <dbReference type="ChEBI" id="CHEBI:59789"/>
        <dbReference type="EC" id="2.5.1.6"/>
    </reaction>
</comment>
<comment type="cofactor">
    <cofactor evidence="1">
        <name>Mg(2+)</name>
        <dbReference type="ChEBI" id="CHEBI:18420"/>
    </cofactor>
    <text evidence="1">Binds 2 divalent ions per subunit.</text>
</comment>
<comment type="cofactor">
    <cofactor evidence="1">
        <name>K(+)</name>
        <dbReference type="ChEBI" id="CHEBI:29103"/>
    </cofactor>
    <text evidence="1">Binds 1 potassium ion per subunit.</text>
</comment>
<comment type="pathway">
    <text evidence="1">Amino-acid biosynthesis; S-adenosyl-L-methionine biosynthesis; S-adenosyl-L-methionine from L-methionine: step 1/1.</text>
</comment>
<comment type="subunit">
    <text evidence="1">Homotetramer; dimer of dimers.</text>
</comment>
<comment type="subcellular location">
    <subcellularLocation>
        <location evidence="1">Cytoplasm</location>
    </subcellularLocation>
</comment>
<comment type="similarity">
    <text evidence="1">Belongs to the AdoMet synthase family.</text>
</comment>
<keyword id="KW-0067">ATP-binding</keyword>
<keyword id="KW-0963">Cytoplasm</keyword>
<keyword id="KW-0460">Magnesium</keyword>
<keyword id="KW-0479">Metal-binding</keyword>
<keyword id="KW-0547">Nucleotide-binding</keyword>
<keyword id="KW-0554">One-carbon metabolism</keyword>
<keyword id="KW-0630">Potassium</keyword>
<keyword id="KW-0808">Transferase</keyword>
<name>METK_BURM9</name>
<protein>
    <recommendedName>
        <fullName evidence="1">S-adenosylmethionine synthase</fullName>
        <shortName evidence="1">AdoMet synthase</shortName>
        <ecNumber evidence="1">2.5.1.6</ecNumber>
    </recommendedName>
    <alternativeName>
        <fullName evidence="1">MAT</fullName>
    </alternativeName>
    <alternativeName>
        <fullName evidence="1">Methionine adenosyltransferase</fullName>
    </alternativeName>
</protein>
<organism>
    <name type="scientific">Burkholderia mallei (strain NCTC 10229)</name>
    <dbReference type="NCBI Taxonomy" id="412022"/>
    <lineage>
        <taxon>Bacteria</taxon>
        <taxon>Pseudomonadati</taxon>
        <taxon>Pseudomonadota</taxon>
        <taxon>Betaproteobacteria</taxon>
        <taxon>Burkholderiales</taxon>
        <taxon>Burkholderiaceae</taxon>
        <taxon>Burkholderia</taxon>
        <taxon>pseudomallei group</taxon>
    </lineage>
</organism>
<gene>
    <name evidence="1" type="primary">metK</name>
    <name type="ordered locus">BMA10229_A2165</name>
</gene>
<sequence length="395" mass="42641">MANDYLFTSESVSEGHPDKVADQISDAILDAILAQDKYSRVAAETLCNTGLVVLAGEITTTANIDYIQIARDTIKRIGYDNTDYGIDYRGCAVLVAYDKQSPDIAQGVDRAHDNNLDQGAGDQGLMFGYACDETPELMPLPIHLSHRLVERQANLRRDGRLPWLRPDAKSQVTVRYVDGKPHSIDTVVLSTQHAPEIDLPALREAVIEEVIKPTLPADLIKGDIKFLVNPTGRFVIGGPQGDCGLTGRKIIVDTYGGAAPHGGGAFSGKDPSKVDRSAAYAGRYVAKNIVAAGLASRALIQVSYAIGVAEPTSVMVNTFGTGRVSDETITKLVREHFDLRPKGIIQMLDLLRPIYEKTAAYGHFGREEPEFSWEAADKALALAEAAGVEPAVQVA</sequence>
<reference key="1">
    <citation type="journal article" date="2010" name="Genome Biol. Evol.">
        <title>Continuing evolution of Burkholderia mallei through genome reduction and large-scale rearrangements.</title>
        <authorList>
            <person name="Losada L."/>
            <person name="Ronning C.M."/>
            <person name="DeShazer D."/>
            <person name="Woods D."/>
            <person name="Fedorova N."/>
            <person name="Kim H.S."/>
            <person name="Shabalina S.A."/>
            <person name="Pearson T.R."/>
            <person name="Brinkac L."/>
            <person name="Tan P."/>
            <person name="Nandi T."/>
            <person name="Crabtree J."/>
            <person name="Badger J."/>
            <person name="Beckstrom-Sternberg S."/>
            <person name="Saqib M."/>
            <person name="Schutzer S.E."/>
            <person name="Keim P."/>
            <person name="Nierman W.C."/>
        </authorList>
    </citation>
    <scope>NUCLEOTIDE SEQUENCE [LARGE SCALE GENOMIC DNA]</scope>
    <source>
        <strain>NCTC 10229</strain>
    </source>
</reference>
<accession>A2S860</accession>
<dbReference type="EC" id="2.5.1.6" evidence="1"/>
<dbReference type="EMBL" id="CP000546">
    <property type="protein sequence ID" value="ABN01442.1"/>
    <property type="molecule type" value="Genomic_DNA"/>
</dbReference>
<dbReference type="RefSeq" id="WP_004199069.1">
    <property type="nucleotide sequence ID" value="NC_008836.1"/>
</dbReference>
<dbReference type="SMR" id="A2S860"/>
<dbReference type="GeneID" id="93058721"/>
<dbReference type="KEGG" id="bml:BMA10229_A2165"/>
<dbReference type="HOGENOM" id="CLU_041802_1_1_4"/>
<dbReference type="UniPathway" id="UPA00315">
    <property type="reaction ID" value="UER00080"/>
</dbReference>
<dbReference type="Proteomes" id="UP000002283">
    <property type="component" value="Chromosome I"/>
</dbReference>
<dbReference type="GO" id="GO:0005737">
    <property type="term" value="C:cytoplasm"/>
    <property type="evidence" value="ECO:0007669"/>
    <property type="project" value="UniProtKB-SubCell"/>
</dbReference>
<dbReference type="GO" id="GO:0005524">
    <property type="term" value="F:ATP binding"/>
    <property type="evidence" value="ECO:0007669"/>
    <property type="project" value="UniProtKB-UniRule"/>
</dbReference>
<dbReference type="GO" id="GO:0000287">
    <property type="term" value="F:magnesium ion binding"/>
    <property type="evidence" value="ECO:0007669"/>
    <property type="project" value="UniProtKB-UniRule"/>
</dbReference>
<dbReference type="GO" id="GO:0004478">
    <property type="term" value="F:methionine adenosyltransferase activity"/>
    <property type="evidence" value="ECO:0007669"/>
    <property type="project" value="UniProtKB-UniRule"/>
</dbReference>
<dbReference type="GO" id="GO:0006730">
    <property type="term" value="P:one-carbon metabolic process"/>
    <property type="evidence" value="ECO:0007669"/>
    <property type="project" value="UniProtKB-KW"/>
</dbReference>
<dbReference type="GO" id="GO:0006556">
    <property type="term" value="P:S-adenosylmethionine biosynthetic process"/>
    <property type="evidence" value="ECO:0007669"/>
    <property type="project" value="UniProtKB-UniRule"/>
</dbReference>
<dbReference type="CDD" id="cd18079">
    <property type="entry name" value="S-AdoMet_synt"/>
    <property type="match status" value="1"/>
</dbReference>
<dbReference type="FunFam" id="3.30.300.10:FF:000003">
    <property type="entry name" value="S-adenosylmethionine synthase"/>
    <property type="match status" value="1"/>
</dbReference>
<dbReference type="FunFam" id="3.30.300.10:FF:000004">
    <property type="entry name" value="S-adenosylmethionine synthase"/>
    <property type="match status" value="1"/>
</dbReference>
<dbReference type="Gene3D" id="3.30.300.10">
    <property type="match status" value="3"/>
</dbReference>
<dbReference type="HAMAP" id="MF_00086">
    <property type="entry name" value="S_AdoMet_synth1"/>
    <property type="match status" value="1"/>
</dbReference>
<dbReference type="InterPro" id="IPR022631">
    <property type="entry name" value="ADOMET_SYNTHASE_CS"/>
</dbReference>
<dbReference type="InterPro" id="IPR022630">
    <property type="entry name" value="S-AdoMet_synt_C"/>
</dbReference>
<dbReference type="InterPro" id="IPR022629">
    <property type="entry name" value="S-AdoMet_synt_central"/>
</dbReference>
<dbReference type="InterPro" id="IPR022628">
    <property type="entry name" value="S-AdoMet_synt_N"/>
</dbReference>
<dbReference type="InterPro" id="IPR002133">
    <property type="entry name" value="S-AdoMet_synthetase"/>
</dbReference>
<dbReference type="InterPro" id="IPR022636">
    <property type="entry name" value="S-AdoMet_synthetase_sfam"/>
</dbReference>
<dbReference type="NCBIfam" id="TIGR01034">
    <property type="entry name" value="metK"/>
    <property type="match status" value="1"/>
</dbReference>
<dbReference type="PANTHER" id="PTHR11964">
    <property type="entry name" value="S-ADENOSYLMETHIONINE SYNTHETASE"/>
    <property type="match status" value="1"/>
</dbReference>
<dbReference type="Pfam" id="PF02773">
    <property type="entry name" value="S-AdoMet_synt_C"/>
    <property type="match status" value="1"/>
</dbReference>
<dbReference type="Pfam" id="PF02772">
    <property type="entry name" value="S-AdoMet_synt_M"/>
    <property type="match status" value="1"/>
</dbReference>
<dbReference type="Pfam" id="PF00438">
    <property type="entry name" value="S-AdoMet_synt_N"/>
    <property type="match status" value="1"/>
</dbReference>
<dbReference type="PIRSF" id="PIRSF000497">
    <property type="entry name" value="MAT"/>
    <property type="match status" value="1"/>
</dbReference>
<dbReference type="SUPFAM" id="SSF55973">
    <property type="entry name" value="S-adenosylmethionine synthetase"/>
    <property type="match status" value="3"/>
</dbReference>
<dbReference type="PROSITE" id="PS00376">
    <property type="entry name" value="ADOMET_SYNTHASE_1"/>
    <property type="match status" value="1"/>
</dbReference>
<dbReference type="PROSITE" id="PS00377">
    <property type="entry name" value="ADOMET_SYNTHASE_2"/>
    <property type="match status" value="1"/>
</dbReference>